<sequence length="399" mass="43897">MAKEKYDRSKPHVNIGTIGHVDHGKTTLTAAITTVLARRLPSSVNQPKDYASIDAAPEERERAGITINTAHVEYETATRHYAHIDAPGHADYVKNMITGAAQMDGAILVVASTDGPMPQTREHILLSRQVGVKHLIVFMNKVDLVDDEELLELVEMEIRDLLSEYDFPGDDLPVIQGSALKALEGDTKFEDIIMELMDTVDSYIPEPERDTDKPLLLPVEDVFSITGRGTVASGRIDRGTVRVNDEIEIVGIKEETKKAVVTGVEMFRKQLDEGLAGDNVGILLRGVQRDEIERGQVIAKPGSINPHTKFKGEVYILSKDEGGRHTPFFNNYRPQFYFRTTDVTGSIELPAGTEMVMPGDNVTINVELIHPIAVEQGTTFSIREGGRTVGSGIVSEIEA</sequence>
<reference key="1">
    <citation type="journal article" date="2006" name="Proc. Natl. Acad. Sci. U.S.A.">
        <title>Molecular genetic anatomy of inter- and intraserotype variation in the human bacterial pathogen group A Streptococcus.</title>
        <authorList>
            <person name="Beres S.B."/>
            <person name="Richter E.W."/>
            <person name="Nagiec M.J."/>
            <person name="Sumby P."/>
            <person name="Porcella S.F."/>
            <person name="DeLeo F.R."/>
            <person name="Musser J.M."/>
        </authorList>
    </citation>
    <scope>NUCLEOTIDE SEQUENCE [LARGE SCALE GENOMIC DNA]</scope>
    <source>
        <strain>MGAS2096</strain>
    </source>
</reference>
<accession>Q1JCT6</accession>
<evidence type="ECO:0000250" key="1"/>
<evidence type="ECO:0000255" key="2">
    <source>
        <dbReference type="HAMAP-Rule" id="MF_00118"/>
    </source>
</evidence>
<evidence type="ECO:0000305" key="3"/>
<proteinExistence type="inferred from homology"/>
<organism>
    <name type="scientific">Streptococcus pyogenes serotype M12 (strain MGAS2096)</name>
    <dbReference type="NCBI Taxonomy" id="370553"/>
    <lineage>
        <taxon>Bacteria</taxon>
        <taxon>Bacillati</taxon>
        <taxon>Bacillota</taxon>
        <taxon>Bacilli</taxon>
        <taxon>Lactobacillales</taxon>
        <taxon>Streptococcaceae</taxon>
        <taxon>Streptococcus</taxon>
    </lineage>
</organism>
<feature type="chain" id="PRO_0000337550" description="Elongation factor Tu">
    <location>
        <begin position="1"/>
        <end position="399"/>
    </location>
</feature>
<feature type="domain" description="tr-type G">
    <location>
        <begin position="10"/>
        <end position="208"/>
    </location>
</feature>
<feature type="region of interest" description="G1" evidence="1">
    <location>
        <begin position="19"/>
        <end position="26"/>
    </location>
</feature>
<feature type="region of interest" description="G2" evidence="1">
    <location>
        <begin position="64"/>
        <end position="68"/>
    </location>
</feature>
<feature type="region of interest" description="G3" evidence="1">
    <location>
        <begin position="85"/>
        <end position="88"/>
    </location>
</feature>
<feature type="region of interest" description="G4" evidence="1">
    <location>
        <begin position="140"/>
        <end position="143"/>
    </location>
</feature>
<feature type="region of interest" description="G5" evidence="1">
    <location>
        <begin position="178"/>
        <end position="180"/>
    </location>
</feature>
<feature type="binding site" evidence="2">
    <location>
        <begin position="19"/>
        <end position="26"/>
    </location>
    <ligand>
        <name>GTP</name>
        <dbReference type="ChEBI" id="CHEBI:37565"/>
    </ligand>
</feature>
<feature type="binding site" evidence="2">
    <location>
        <position position="26"/>
    </location>
    <ligand>
        <name>Mg(2+)</name>
        <dbReference type="ChEBI" id="CHEBI:18420"/>
    </ligand>
</feature>
<feature type="binding site" evidence="2">
    <location>
        <begin position="85"/>
        <end position="89"/>
    </location>
    <ligand>
        <name>GTP</name>
        <dbReference type="ChEBI" id="CHEBI:37565"/>
    </ligand>
</feature>
<feature type="binding site" evidence="2">
    <location>
        <begin position="140"/>
        <end position="143"/>
    </location>
    <ligand>
        <name>GTP</name>
        <dbReference type="ChEBI" id="CHEBI:37565"/>
    </ligand>
</feature>
<comment type="function">
    <text evidence="2">GTP hydrolase that promotes the GTP-dependent binding of aminoacyl-tRNA to the A-site of ribosomes during protein biosynthesis.</text>
</comment>
<comment type="catalytic activity">
    <reaction evidence="2">
        <text>GTP + H2O = GDP + phosphate + H(+)</text>
        <dbReference type="Rhea" id="RHEA:19669"/>
        <dbReference type="ChEBI" id="CHEBI:15377"/>
        <dbReference type="ChEBI" id="CHEBI:15378"/>
        <dbReference type="ChEBI" id="CHEBI:37565"/>
        <dbReference type="ChEBI" id="CHEBI:43474"/>
        <dbReference type="ChEBI" id="CHEBI:58189"/>
        <dbReference type="EC" id="3.6.5.3"/>
    </reaction>
    <physiologicalReaction direction="left-to-right" evidence="2">
        <dbReference type="Rhea" id="RHEA:19670"/>
    </physiologicalReaction>
</comment>
<comment type="subunit">
    <text evidence="2">Monomer.</text>
</comment>
<comment type="subcellular location">
    <subcellularLocation>
        <location evidence="2">Cytoplasm</location>
    </subcellularLocation>
</comment>
<comment type="similarity">
    <text evidence="2">Belongs to the TRAFAC class translation factor GTPase superfamily. Classic translation factor GTPase family. EF-Tu/EF-1A subfamily.</text>
</comment>
<comment type="sequence caution" evidence="3">
    <conflict type="frameshift">
        <sequence resource="EMBL-CDS" id="ABF35572"/>
    </conflict>
</comment>
<gene>
    <name evidence="2" type="primary">tuf</name>
    <name type="ordered locus">MGAS2096_Spy0520</name>
</gene>
<keyword id="KW-0963">Cytoplasm</keyword>
<keyword id="KW-0251">Elongation factor</keyword>
<keyword id="KW-0342">GTP-binding</keyword>
<keyword id="KW-0378">Hydrolase</keyword>
<keyword id="KW-0460">Magnesium</keyword>
<keyword id="KW-0479">Metal-binding</keyword>
<keyword id="KW-0547">Nucleotide-binding</keyword>
<keyword id="KW-0648">Protein biosynthesis</keyword>
<name>EFTU_STRPB</name>
<protein>
    <recommendedName>
        <fullName evidence="2">Elongation factor Tu</fullName>
        <shortName evidence="2">EF-Tu</shortName>
        <ecNumber evidence="2">3.6.5.3</ecNumber>
    </recommendedName>
</protein>
<dbReference type="EC" id="3.6.5.3" evidence="2"/>
<dbReference type="EMBL" id="CP000261">
    <property type="protein sequence ID" value="ABF35572.1"/>
    <property type="status" value="ALT_FRAME"/>
    <property type="molecule type" value="Genomic_DNA"/>
</dbReference>
<dbReference type="SMR" id="Q1JCT6"/>
<dbReference type="KEGG" id="spj:MGAS2096_Spy0520"/>
<dbReference type="HOGENOM" id="CLU_007265_0_1_9"/>
<dbReference type="GO" id="GO:0005829">
    <property type="term" value="C:cytosol"/>
    <property type="evidence" value="ECO:0007669"/>
    <property type="project" value="TreeGrafter"/>
</dbReference>
<dbReference type="GO" id="GO:0005525">
    <property type="term" value="F:GTP binding"/>
    <property type="evidence" value="ECO:0007669"/>
    <property type="project" value="UniProtKB-UniRule"/>
</dbReference>
<dbReference type="GO" id="GO:0003924">
    <property type="term" value="F:GTPase activity"/>
    <property type="evidence" value="ECO:0007669"/>
    <property type="project" value="InterPro"/>
</dbReference>
<dbReference type="GO" id="GO:0003746">
    <property type="term" value="F:translation elongation factor activity"/>
    <property type="evidence" value="ECO:0007669"/>
    <property type="project" value="UniProtKB-UniRule"/>
</dbReference>
<dbReference type="CDD" id="cd01884">
    <property type="entry name" value="EF_Tu"/>
    <property type="match status" value="1"/>
</dbReference>
<dbReference type="CDD" id="cd03697">
    <property type="entry name" value="EFTU_II"/>
    <property type="match status" value="1"/>
</dbReference>
<dbReference type="CDD" id="cd03707">
    <property type="entry name" value="EFTU_III"/>
    <property type="match status" value="1"/>
</dbReference>
<dbReference type="FunFam" id="2.40.30.10:FF:000001">
    <property type="entry name" value="Elongation factor Tu"/>
    <property type="match status" value="1"/>
</dbReference>
<dbReference type="FunFam" id="3.40.50.300:FF:000003">
    <property type="entry name" value="Elongation factor Tu"/>
    <property type="match status" value="1"/>
</dbReference>
<dbReference type="Gene3D" id="3.40.50.300">
    <property type="entry name" value="P-loop containing nucleotide triphosphate hydrolases"/>
    <property type="match status" value="1"/>
</dbReference>
<dbReference type="Gene3D" id="2.40.30.10">
    <property type="entry name" value="Translation factors"/>
    <property type="match status" value="2"/>
</dbReference>
<dbReference type="HAMAP" id="MF_00118_B">
    <property type="entry name" value="EF_Tu_B"/>
    <property type="match status" value="1"/>
</dbReference>
<dbReference type="InterPro" id="IPR041709">
    <property type="entry name" value="EF-Tu_GTP-bd"/>
</dbReference>
<dbReference type="InterPro" id="IPR050055">
    <property type="entry name" value="EF-Tu_GTPase"/>
</dbReference>
<dbReference type="InterPro" id="IPR004161">
    <property type="entry name" value="EFTu-like_2"/>
</dbReference>
<dbReference type="InterPro" id="IPR033720">
    <property type="entry name" value="EFTU_2"/>
</dbReference>
<dbReference type="InterPro" id="IPR027417">
    <property type="entry name" value="P-loop_NTPase"/>
</dbReference>
<dbReference type="InterPro" id="IPR005225">
    <property type="entry name" value="Small_GTP-bd"/>
</dbReference>
<dbReference type="InterPro" id="IPR000795">
    <property type="entry name" value="T_Tr_GTP-bd_dom"/>
</dbReference>
<dbReference type="InterPro" id="IPR009000">
    <property type="entry name" value="Transl_B-barrel_sf"/>
</dbReference>
<dbReference type="InterPro" id="IPR009001">
    <property type="entry name" value="Transl_elong_EF1A/Init_IF2_C"/>
</dbReference>
<dbReference type="InterPro" id="IPR004541">
    <property type="entry name" value="Transl_elong_EFTu/EF1A_bac/org"/>
</dbReference>
<dbReference type="InterPro" id="IPR004160">
    <property type="entry name" value="Transl_elong_EFTu/EF1A_C"/>
</dbReference>
<dbReference type="NCBIfam" id="TIGR00485">
    <property type="entry name" value="EF-Tu"/>
    <property type="match status" value="1"/>
</dbReference>
<dbReference type="NCBIfam" id="NF000766">
    <property type="entry name" value="PRK00049.1"/>
    <property type="match status" value="1"/>
</dbReference>
<dbReference type="NCBIfam" id="NF009372">
    <property type="entry name" value="PRK12735.1"/>
    <property type="match status" value="1"/>
</dbReference>
<dbReference type="NCBIfam" id="NF009373">
    <property type="entry name" value="PRK12736.1"/>
    <property type="match status" value="1"/>
</dbReference>
<dbReference type="NCBIfam" id="TIGR00231">
    <property type="entry name" value="small_GTP"/>
    <property type="match status" value="1"/>
</dbReference>
<dbReference type="PANTHER" id="PTHR43721:SF22">
    <property type="entry name" value="ELONGATION FACTOR TU, MITOCHONDRIAL"/>
    <property type="match status" value="1"/>
</dbReference>
<dbReference type="PANTHER" id="PTHR43721">
    <property type="entry name" value="ELONGATION FACTOR TU-RELATED"/>
    <property type="match status" value="1"/>
</dbReference>
<dbReference type="Pfam" id="PF00009">
    <property type="entry name" value="GTP_EFTU"/>
    <property type="match status" value="1"/>
</dbReference>
<dbReference type="Pfam" id="PF03144">
    <property type="entry name" value="GTP_EFTU_D2"/>
    <property type="match status" value="1"/>
</dbReference>
<dbReference type="Pfam" id="PF03143">
    <property type="entry name" value="GTP_EFTU_D3"/>
    <property type="match status" value="1"/>
</dbReference>
<dbReference type="PRINTS" id="PR00315">
    <property type="entry name" value="ELONGATNFCT"/>
</dbReference>
<dbReference type="SUPFAM" id="SSF50465">
    <property type="entry name" value="EF-Tu/eEF-1alpha/eIF2-gamma C-terminal domain"/>
    <property type="match status" value="1"/>
</dbReference>
<dbReference type="SUPFAM" id="SSF52540">
    <property type="entry name" value="P-loop containing nucleoside triphosphate hydrolases"/>
    <property type="match status" value="1"/>
</dbReference>
<dbReference type="SUPFAM" id="SSF50447">
    <property type="entry name" value="Translation proteins"/>
    <property type="match status" value="1"/>
</dbReference>
<dbReference type="PROSITE" id="PS51722">
    <property type="entry name" value="G_TR_2"/>
    <property type="match status" value="1"/>
</dbReference>